<gene>
    <name type="primary">rho5</name>
    <name type="ORF">SPAC20H4.11c</name>
</gene>
<dbReference type="EMBL" id="CU329670">
    <property type="protein sequence ID" value="CAC19741.1"/>
    <property type="molecule type" value="Genomic_DNA"/>
</dbReference>
<dbReference type="RefSeq" id="NP_593631.1">
    <property type="nucleotide sequence ID" value="NM_001019062.2"/>
</dbReference>
<dbReference type="SMR" id="Q9HE04"/>
<dbReference type="BioGRID" id="278496">
    <property type="interactions" value="15"/>
</dbReference>
<dbReference type="FunCoup" id="Q9HE04">
    <property type="interactions" value="808"/>
</dbReference>
<dbReference type="STRING" id="284812.Q9HE04"/>
<dbReference type="iPTMnet" id="Q9HE04"/>
<dbReference type="PaxDb" id="4896-SPAC20H4.11c.1"/>
<dbReference type="EnsemblFungi" id="SPAC20H4.11c.1">
    <property type="protein sequence ID" value="SPAC20H4.11c.1:pep"/>
    <property type="gene ID" value="SPAC20H4.11c"/>
</dbReference>
<dbReference type="GeneID" id="2542013"/>
<dbReference type="KEGG" id="spo:2542013"/>
<dbReference type="PomBase" id="SPAC20H4.11c">
    <property type="gene designation" value="rho5"/>
</dbReference>
<dbReference type="VEuPathDB" id="FungiDB:SPAC20H4.11c"/>
<dbReference type="eggNOG" id="KOG0393">
    <property type="taxonomic scope" value="Eukaryota"/>
</dbReference>
<dbReference type="HOGENOM" id="CLU_041217_21_2_1"/>
<dbReference type="InParanoid" id="Q9HE04"/>
<dbReference type="OMA" id="KNGFIMF"/>
<dbReference type="PhylomeDB" id="Q9HE04"/>
<dbReference type="Reactome" id="R-SPO-416482">
    <property type="pathway name" value="G alpha (12/13) signalling events"/>
</dbReference>
<dbReference type="Reactome" id="R-SPO-5625740">
    <property type="pathway name" value="RHO GTPases activate PKNs"/>
</dbReference>
<dbReference type="Reactome" id="R-SPO-6798695">
    <property type="pathway name" value="Neutrophil degranulation"/>
</dbReference>
<dbReference type="Reactome" id="R-SPO-9013026">
    <property type="pathway name" value="RHOB GTPase cycle"/>
</dbReference>
<dbReference type="Reactome" id="R-SPO-9013106">
    <property type="pathway name" value="RHOC GTPase cycle"/>
</dbReference>
<dbReference type="Reactome" id="R-SPO-9013405">
    <property type="pathway name" value="RHOD GTPase cycle"/>
</dbReference>
<dbReference type="Reactome" id="R-SPO-9035034">
    <property type="pathway name" value="RHOF GTPase cycle"/>
</dbReference>
<dbReference type="Reactome" id="R-SPO-9696264">
    <property type="pathway name" value="RND3 GTPase cycle"/>
</dbReference>
<dbReference type="Reactome" id="R-SPO-9696270">
    <property type="pathway name" value="RND2 GTPase cycle"/>
</dbReference>
<dbReference type="Reactome" id="R-SPO-9696273">
    <property type="pathway name" value="RND1 GTPase cycle"/>
</dbReference>
<dbReference type="PRO" id="PR:Q9HE04"/>
<dbReference type="Proteomes" id="UP000002485">
    <property type="component" value="Chromosome I"/>
</dbReference>
<dbReference type="GO" id="GO:0032153">
    <property type="term" value="C:cell division site"/>
    <property type="evidence" value="ECO:0000314"/>
    <property type="project" value="PomBase"/>
</dbReference>
<dbReference type="GO" id="GO:0051286">
    <property type="term" value="C:cell tip"/>
    <property type="evidence" value="ECO:0000314"/>
    <property type="project" value="PomBase"/>
</dbReference>
<dbReference type="GO" id="GO:0005829">
    <property type="term" value="C:cytosol"/>
    <property type="evidence" value="ECO:0007005"/>
    <property type="project" value="PomBase"/>
</dbReference>
<dbReference type="GO" id="GO:0005634">
    <property type="term" value="C:nucleus"/>
    <property type="evidence" value="ECO:0007005"/>
    <property type="project" value="PomBase"/>
</dbReference>
<dbReference type="GO" id="GO:0005886">
    <property type="term" value="C:plasma membrane"/>
    <property type="evidence" value="ECO:0000318"/>
    <property type="project" value="GO_Central"/>
</dbReference>
<dbReference type="GO" id="GO:0031520">
    <property type="term" value="C:plasma membrane of cell tip"/>
    <property type="evidence" value="ECO:0000305"/>
    <property type="project" value="PomBase"/>
</dbReference>
<dbReference type="GO" id="GO:0005525">
    <property type="term" value="F:GTP binding"/>
    <property type="evidence" value="ECO:0000318"/>
    <property type="project" value="GO_Central"/>
</dbReference>
<dbReference type="GO" id="GO:0003924">
    <property type="term" value="F:GTPase activity"/>
    <property type="evidence" value="ECO:0000318"/>
    <property type="project" value="GO_Central"/>
</dbReference>
<dbReference type="GO" id="GO:0019901">
    <property type="term" value="F:protein kinase binding"/>
    <property type="evidence" value="ECO:0000318"/>
    <property type="project" value="GO_Central"/>
</dbReference>
<dbReference type="GO" id="GO:0007015">
    <property type="term" value="P:actin filament organization"/>
    <property type="evidence" value="ECO:0000318"/>
    <property type="project" value="GO_Central"/>
</dbReference>
<dbReference type="GO" id="GO:0032956">
    <property type="term" value="P:regulation of actin cytoskeleton organization"/>
    <property type="evidence" value="ECO:0000318"/>
    <property type="project" value="GO_Central"/>
</dbReference>
<dbReference type="GO" id="GO:0030100">
    <property type="term" value="P:regulation of endocytosis"/>
    <property type="evidence" value="ECO:0000266"/>
    <property type="project" value="PomBase"/>
</dbReference>
<dbReference type="GO" id="GO:0032995">
    <property type="term" value="P:regulation of fungal-type cell wall biogenesis"/>
    <property type="evidence" value="ECO:0000315"/>
    <property type="project" value="PomBase"/>
</dbReference>
<dbReference type="GO" id="GO:0007165">
    <property type="term" value="P:signal transduction"/>
    <property type="evidence" value="ECO:0000318"/>
    <property type="project" value="GO_Central"/>
</dbReference>
<dbReference type="GO" id="GO:0007264">
    <property type="term" value="P:small GTPase-mediated signal transduction"/>
    <property type="evidence" value="ECO:0007669"/>
    <property type="project" value="InterPro"/>
</dbReference>
<dbReference type="CDD" id="cd01870">
    <property type="entry name" value="RhoA_like"/>
    <property type="match status" value="1"/>
</dbReference>
<dbReference type="FunFam" id="3.40.50.300:FF:000329">
    <property type="entry name" value="GTP-binding protein rhoA"/>
    <property type="match status" value="1"/>
</dbReference>
<dbReference type="Gene3D" id="3.40.50.300">
    <property type="entry name" value="P-loop containing nucleotide triphosphate hydrolases"/>
    <property type="match status" value="1"/>
</dbReference>
<dbReference type="InterPro" id="IPR027417">
    <property type="entry name" value="P-loop_NTPase"/>
</dbReference>
<dbReference type="InterPro" id="IPR005225">
    <property type="entry name" value="Small_GTP-bd"/>
</dbReference>
<dbReference type="InterPro" id="IPR001806">
    <property type="entry name" value="Small_GTPase"/>
</dbReference>
<dbReference type="InterPro" id="IPR003578">
    <property type="entry name" value="Small_GTPase_Rho"/>
</dbReference>
<dbReference type="NCBIfam" id="TIGR00231">
    <property type="entry name" value="small_GTP"/>
    <property type="match status" value="1"/>
</dbReference>
<dbReference type="PANTHER" id="PTHR24072">
    <property type="entry name" value="RHO FAMILY GTPASE"/>
    <property type="match status" value="1"/>
</dbReference>
<dbReference type="Pfam" id="PF00071">
    <property type="entry name" value="Ras"/>
    <property type="match status" value="1"/>
</dbReference>
<dbReference type="PRINTS" id="PR00449">
    <property type="entry name" value="RASTRNSFRMNG"/>
</dbReference>
<dbReference type="SMART" id="SM00175">
    <property type="entry name" value="RAB"/>
    <property type="match status" value="1"/>
</dbReference>
<dbReference type="SMART" id="SM00176">
    <property type="entry name" value="RAN"/>
    <property type="match status" value="1"/>
</dbReference>
<dbReference type="SMART" id="SM00173">
    <property type="entry name" value="RAS"/>
    <property type="match status" value="1"/>
</dbReference>
<dbReference type="SMART" id="SM00174">
    <property type="entry name" value="RHO"/>
    <property type="match status" value="1"/>
</dbReference>
<dbReference type="SUPFAM" id="SSF52540">
    <property type="entry name" value="P-loop containing nucleoside triphosphate hydrolases"/>
    <property type="match status" value="1"/>
</dbReference>
<dbReference type="PROSITE" id="PS51420">
    <property type="entry name" value="RHO"/>
    <property type="match status" value="1"/>
</dbReference>
<accession>Q9HE04</accession>
<organism>
    <name type="scientific">Schizosaccharomyces pombe (strain 972 / ATCC 24843)</name>
    <name type="common">Fission yeast</name>
    <dbReference type="NCBI Taxonomy" id="284812"/>
    <lineage>
        <taxon>Eukaryota</taxon>
        <taxon>Fungi</taxon>
        <taxon>Dikarya</taxon>
        <taxon>Ascomycota</taxon>
        <taxon>Taphrinomycotina</taxon>
        <taxon>Schizosaccharomycetes</taxon>
        <taxon>Schizosaccharomycetales</taxon>
        <taxon>Schizosaccharomycetaceae</taxon>
        <taxon>Schizosaccharomyces</taxon>
    </lineage>
</organism>
<evidence type="ECO:0000250" key="1"/>
<evidence type="ECO:0000305" key="2"/>
<proteinExistence type="inferred from homology"/>
<name>RHO5_SCHPO</name>
<feature type="chain" id="PRO_0000198944" description="GTP-binding protein rho5">
    <location>
        <begin position="1"/>
        <end position="197"/>
    </location>
</feature>
<feature type="propeptide" id="PRO_0000281274" description="Removed in mature form" evidence="1">
    <location>
        <begin position="198"/>
        <end position="200"/>
    </location>
</feature>
<feature type="short sequence motif" description="Effector region" evidence="1">
    <location>
        <begin position="35"/>
        <end position="43"/>
    </location>
</feature>
<feature type="binding site" evidence="1">
    <location>
        <begin position="13"/>
        <end position="20"/>
    </location>
    <ligand>
        <name>GTP</name>
        <dbReference type="ChEBI" id="CHEBI:37565"/>
    </ligand>
</feature>
<feature type="binding site" evidence="1">
    <location>
        <begin position="60"/>
        <end position="64"/>
    </location>
    <ligand>
        <name>GTP</name>
        <dbReference type="ChEBI" id="CHEBI:37565"/>
    </ligand>
</feature>
<feature type="binding site" evidence="1">
    <location>
        <begin position="118"/>
        <end position="121"/>
    </location>
    <ligand>
        <name>GTP</name>
        <dbReference type="ChEBI" id="CHEBI:37565"/>
    </ligand>
</feature>
<feature type="modified residue" description="Cysteine methyl ester" evidence="1">
    <location>
        <position position="197"/>
    </location>
</feature>
<feature type="lipid moiety-binding region" description="S-geranylgeranyl cysteine" evidence="1">
    <location>
        <position position="197"/>
    </location>
</feature>
<keyword id="KW-1003">Cell membrane</keyword>
<keyword id="KW-0342">GTP-binding</keyword>
<keyword id="KW-0449">Lipoprotein</keyword>
<keyword id="KW-0472">Membrane</keyword>
<keyword id="KW-0488">Methylation</keyword>
<keyword id="KW-0547">Nucleotide-binding</keyword>
<keyword id="KW-0636">Prenylation</keyword>
<keyword id="KW-1185">Reference proteome</keyword>
<protein>
    <recommendedName>
        <fullName>GTP-binding protein rho5</fullName>
    </recommendedName>
</protein>
<comment type="subcellular location">
    <subcellularLocation>
        <location evidence="2">Cell membrane</location>
        <topology evidence="2">Lipid-anchor</topology>
        <orientation evidence="2">Cytoplasmic side</orientation>
    </subcellularLocation>
</comment>
<comment type="similarity">
    <text evidence="2">Belongs to the small GTPase superfamily. Rho family.</text>
</comment>
<reference key="1">
    <citation type="journal article" date="2002" name="Nature">
        <title>The genome sequence of Schizosaccharomyces pombe.</title>
        <authorList>
            <person name="Wood V."/>
            <person name="Gwilliam R."/>
            <person name="Rajandream M.A."/>
            <person name="Lyne M.H."/>
            <person name="Lyne R."/>
            <person name="Stewart A."/>
            <person name="Sgouros J.G."/>
            <person name="Peat N."/>
            <person name="Hayles J."/>
            <person name="Baker S.G."/>
            <person name="Basham D."/>
            <person name="Bowman S."/>
            <person name="Brooks K."/>
            <person name="Brown D."/>
            <person name="Brown S."/>
            <person name="Chillingworth T."/>
            <person name="Churcher C.M."/>
            <person name="Collins M."/>
            <person name="Connor R."/>
            <person name="Cronin A."/>
            <person name="Davis P."/>
            <person name="Feltwell T."/>
            <person name="Fraser A."/>
            <person name="Gentles S."/>
            <person name="Goble A."/>
            <person name="Hamlin N."/>
            <person name="Harris D.E."/>
            <person name="Hidalgo J."/>
            <person name="Hodgson G."/>
            <person name="Holroyd S."/>
            <person name="Hornsby T."/>
            <person name="Howarth S."/>
            <person name="Huckle E.J."/>
            <person name="Hunt S."/>
            <person name="Jagels K."/>
            <person name="James K.D."/>
            <person name="Jones L."/>
            <person name="Jones M."/>
            <person name="Leather S."/>
            <person name="McDonald S."/>
            <person name="McLean J."/>
            <person name="Mooney P."/>
            <person name="Moule S."/>
            <person name="Mungall K.L."/>
            <person name="Murphy L.D."/>
            <person name="Niblett D."/>
            <person name="Odell C."/>
            <person name="Oliver K."/>
            <person name="O'Neil S."/>
            <person name="Pearson D."/>
            <person name="Quail M.A."/>
            <person name="Rabbinowitsch E."/>
            <person name="Rutherford K.M."/>
            <person name="Rutter S."/>
            <person name="Saunders D."/>
            <person name="Seeger K."/>
            <person name="Sharp S."/>
            <person name="Skelton J."/>
            <person name="Simmonds M.N."/>
            <person name="Squares R."/>
            <person name="Squares S."/>
            <person name="Stevens K."/>
            <person name="Taylor K."/>
            <person name="Taylor R.G."/>
            <person name="Tivey A."/>
            <person name="Walsh S.V."/>
            <person name="Warren T."/>
            <person name="Whitehead S."/>
            <person name="Woodward J.R."/>
            <person name="Volckaert G."/>
            <person name="Aert R."/>
            <person name="Robben J."/>
            <person name="Grymonprez B."/>
            <person name="Weltjens I."/>
            <person name="Vanstreels E."/>
            <person name="Rieger M."/>
            <person name="Schaefer M."/>
            <person name="Mueller-Auer S."/>
            <person name="Gabel C."/>
            <person name="Fuchs M."/>
            <person name="Duesterhoeft A."/>
            <person name="Fritzc C."/>
            <person name="Holzer E."/>
            <person name="Moestl D."/>
            <person name="Hilbert H."/>
            <person name="Borzym K."/>
            <person name="Langer I."/>
            <person name="Beck A."/>
            <person name="Lehrach H."/>
            <person name="Reinhardt R."/>
            <person name="Pohl T.M."/>
            <person name="Eger P."/>
            <person name="Zimmermann W."/>
            <person name="Wedler H."/>
            <person name="Wambutt R."/>
            <person name="Purnelle B."/>
            <person name="Goffeau A."/>
            <person name="Cadieu E."/>
            <person name="Dreano S."/>
            <person name="Gloux S."/>
            <person name="Lelaure V."/>
            <person name="Mottier S."/>
            <person name="Galibert F."/>
            <person name="Aves S.J."/>
            <person name="Xiang Z."/>
            <person name="Hunt C."/>
            <person name="Moore K."/>
            <person name="Hurst S.M."/>
            <person name="Lucas M."/>
            <person name="Rochet M."/>
            <person name="Gaillardin C."/>
            <person name="Tallada V.A."/>
            <person name="Garzon A."/>
            <person name="Thode G."/>
            <person name="Daga R.R."/>
            <person name="Cruzado L."/>
            <person name="Jimenez J."/>
            <person name="Sanchez M."/>
            <person name="del Rey F."/>
            <person name="Benito J."/>
            <person name="Dominguez A."/>
            <person name="Revuelta J.L."/>
            <person name="Moreno S."/>
            <person name="Armstrong J."/>
            <person name="Forsburg S.L."/>
            <person name="Cerutti L."/>
            <person name="Lowe T."/>
            <person name="McCombie W.R."/>
            <person name="Paulsen I."/>
            <person name="Potashkin J."/>
            <person name="Shpakovski G.V."/>
            <person name="Ussery D."/>
            <person name="Barrell B.G."/>
            <person name="Nurse P."/>
        </authorList>
    </citation>
    <scope>NUCLEOTIDE SEQUENCE [LARGE SCALE GENOMIC DNA]</scope>
    <source>
        <strain>972 / ATCC 24843</strain>
    </source>
</reference>
<sequence length="200" mass="22408">MTTELRRKLVIVGDGACGKTCLLIVFSKGTFPEVYVPTVFENYVADVEVDGRHIELALWDTAGQEDYDRLRPLSYPDSHVVLICFSVDAPESLDNVQEKWISEVLHFCSNLPILLVGCKVDLRNDPKTIEELSKTSQKPITFEEGQVVAQKIGAYKYLECSAKLNEGVNEVFETAARASMLKFKPASVPKTKKKKHCILL</sequence>